<reference key="1">
    <citation type="journal article" date="2005" name="J. Bacteriol.">
        <title>Whole-genome sequence analysis of Pseudomonas syringae pv. phaseolicola 1448A reveals divergence among pathovars in genes involved in virulence and transposition.</title>
        <authorList>
            <person name="Joardar V."/>
            <person name="Lindeberg M."/>
            <person name="Jackson R.W."/>
            <person name="Selengut J."/>
            <person name="Dodson R."/>
            <person name="Brinkac L.M."/>
            <person name="Daugherty S.C."/>
            <person name="DeBoy R.T."/>
            <person name="Durkin A.S."/>
            <person name="Gwinn Giglio M."/>
            <person name="Madupu R."/>
            <person name="Nelson W.C."/>
            <person name="Rosovitz M.J."/>
            <person name="Sullivan S.A."/>
            <person name="Crabtree J."/>
            <person name="Creasy T."/>
            <person name="Davidsen T.M."/>
            <person name="Haft D.H."/>
            <person name="Zafar N."/>
            <person name="Zhou L."/>
            <person name="Halpin R."/>
            <person name="Holley T."/>
            <person name="Khouri H.M."/>
            <person name="Feldblyum T.V."/>
            <person name="White O."/>
            <person name="Fraser C.M."/>
            <person name="Chatterjee A.K."/>
            <person name="Cartinhour S."/>
            <person name="Schneider D."/>
            <person name="Mansfield J.W."/>
            <person name="Collmer A."/>
            <person name="Buell R."/>
        </authorList>
    </citation>
    <scope>NUCLEOTIDE SEQUENCE [LARGE SCALE GENOMIC DNA]</scope>
    <source>
        <strain>1448A / Race 6</strain>
    </source>
</reference>
<protein>
    <recommendedName>
        <fullName evidence="1">Acetyl-coenzyme A carboxylase carboxyl transferase subunit alpha</fullName>
        <shortName evidence="1">ACCase subunit alpha</shortName>
        <shortName evidence="1">Acetyl-CoA carboxylase carboxyltransferase subunit alpha</shortName>
        <ecNumber evidence="1">2.1.3.15</ecNumber>
    </recommendedName>
</protein>
<proteinExistence type="inferred from homology"/>
<gene>
    <name evidence="1" type="primary">accA</name>
    <name type="ordered locus">PSPPH_3824</name>
</gene>
<keyword id="KW-0067">ATP-binding</keyword>
<keyword id="KW-0963">Cytoplasm</keyword>
<keyword id="KW-0275">Fatty acid biosynthesis</keyword>
<keyword id="KW-0276">Fatty acid metabolism</keyword>
<keyword id="KW-0444">Lipid biosynthesis</keyword>
<keyword id="KW-0443">Lipid metabolism</keyword>
<keyword id="KW-0547">Nucleotide-binding</keyword>
<keyword id="KW-0808">Transferase</keyword>
<sequence length="315" mass="35020">MNPNFLDFEQPIADLQAKIEELRLVGNDNSLNIGDEISRLQDKSKTLTESIFGNLTSWQIARMARHPRRPYTLDYIENIFTEFDELHGDRHFSDDAAIVGGIARLDGQPVMVIGHQKGREVREKVRRNFGMPRPEGYRKACRLMEMAERFKMPILTFIDTPGAYPGIDAEERNQSEAIAWNLRVMARLKTPIIATVIGEGGSGGALAIGVCDQLNMLQYSTYAVISPEGCASILWKTAEKAPDAAEAMGITADRLKGLGIVDKVIAEPLGGAHRDPVAAAALIREELSSQLAMLKEFDNDELLARRYDRLMSYGL</sequence>
<dbReference type="EC" id="2.1.3.15" evidence="1"/>
<dbReference type="EMBL" id="CP000058">
    <property type="protein sequence ID" value="AAZ33423.1"/>
    <property type="status" value="ALT_INIT"/>
    <property type="molecule type" value="Genomic_DNA"/>
</dbReference>
<dbReference type="RefSeq" id="WP_002554714.1">
    <property type="nucleotide sequence ID" value="NC_005773.3"/>
</dbReference>
<dbReference type="SMR" id="Q48F75"/>
<dbReference type="GeneID" id="61868783"/>
<dbReference type="KEGG" id="psp:PSPPH_3824"/>
<dbReference type="eggNOG" id="COG0825">
    <property type="taxonomic scope" value="Bacteria"/>
</dbReference>
<dbReference type="HOGENOM" id="CLU_015486_0_2_6"/>
<dbReference type="UniPathway" id="UPA00655">
    <property type="reaction ID" value="UER00711"/>
</dbReference>
<dbReference type="Proteomes" id="UP000000551">
    <property type="component" value="Chromosome"/>
</dbReference>
<dbReference type="GO" id="GO:0009317">
    <property type="term" value="C:acetyl-CoA carboxylase complex"/>
    <property type="evidence" value="ECO:0007669"/>
    <property type="project" value="InterPro"/>
</dbReference>
<dbReference type="GO" id="GO:0003989">
    <property type="term" value="F:acetyl-CoA carboxylase activity"/>
    <property type="evidence" value="ECO:0007669"/>
    <property type="project" value="InterPro"/>
</dbReference>
<dbReference type="GO" id="GO:0005524">
    <property type="term" value="F:ATP binding"/>
    <property type="evidence" value="ECO:0007669"/>
    <property type="project" value="UniProtKB-KW"/>
</dbReference>
<dbReference type="GO" id="GO:0016743">
    <property type="term" value="F:carboxyl- or carbamoyltransferase activity"/>
    <property type="evidence" value="ECO:0007669"/>
    <property type="project" value="UniProtKB-UniRule"/>
</dbReference>
<dbReference type="GO" id="GO:0006633">
    <property type="term" value="P:fatty acid biosynthetic process"/>
    <property type="evidence" value="ECO:0007669"/>
    <property type="project" value="UniProtKB-KW"/>
</dbReference>
<dbReference type="GO" id="GO:2001295">
    <property type="term" value="P:malonyl-CoA biosynthetic process"/>
    <property type="evidence" value="ECO:0007669"/>
    <property type="project" value="UniProtKB-UniRule"/>
</dbReference>
<dbReference type="FunFam" id="3.90.226.10:FF:000008">
    <property type="entry name" value="Acetyl-coenzyme A carboxylase carboxyl transferase subunit alpha"/>
    <property type="match status" value="1"/>
</dbReference>
<dbReference type="Gene3D" id="3.90.226.10">
    <property type="entry name" value="2-enoyl-CoA Hydratase, Chain A, domain 1"/>
    <property type="match status" value="1"/>
</dbReference>
<dbReference type="HAMAP" id="MF_00823">
    <property type="entry name" value="AcetylCoA_CT_alpha"/>
    <property type="match status" value="1"/>
</dbReference>
<dbReference type="InterPro" id="IPR001095">
    <property type="entry name" value="Acetyl_CoA_COase_a_su"/>
</dbReference>
<dbReference type="InterPro" id="IPR029045">
    <property type="entry name" value="ClpP/crotonase-like_dom_sf"/>
</dbReference>
<dbReference type="InterPro" id="IPR011763">
    <property type="entry name" value="COA_CT_C"/>
</dbReference>
<dbReference type="NCBIfam" id="TIGR00513">
    <property type="entry name" value="accA"/>
    <property type="match status" value="1"/>
</dbReference>
<dbReference type="NCBIfam" id="NF041504">
    <property type="entry name" value="AccA_sub"/>
    <property type="match status" value="1"/>
</dbReference>
<dbReference type="NCBIfam" id="NF004344">
    <property type="entry name" value="PRK05724.1"/>
    <property type="match status" value="1"/>
</dbReference>
<dbReference type="PANTHER" id="PTHR42853">
    <property type="entry name" value="ACETYL-COENZYME A CARBOXYLASE CARBOXYL TRANSFERASE SUBUNIT ALPHA"/>
    <property type="match status" value="1"/>
</dbReference>
<dbReference type="PANTHER" id="PTHR42853:SF3">
    <property type="entry name" value="ACETYL-COENZYME A CARBOXYLASE CARBOXYL TRANSFERASE SUBUNIT ALPHA, CHLOROPLASTIC"/>
    <property type="match status" value="1"/>
</dbReference>
<dbReference type="Pfam" id="PF03255">
    <property type="entry name" value="ACCA"/>
    <property type="match status" value="1"/>
</dbReference>
<dbReference type="PRINTS" id="PR01069">
    <property type="entry name" value="ACCCTRFRASEA"/>
</dbReference>
<dbReference type="SUPFAM" id="SSF52096">
    <property type="entry name" value="ClpP/crotonase"/>
    <property type="match status" value="1"/>
</dbReference>
<dbReference type="PROSITE" id="PS50989">
    <property type="entry name" value="COA_CT_CTER"/>
    <property type="match status" value="1"/>
</dbReference>
<accession>Q48F75</accession>
<comment type="function">
    <text evidence="1">Component of the acetyl coenzyme A carboxylase (ACC) complex. First, biotin carboxylase catalyzes the carboxylation of biotin on its carrier protein (BCCP) and then the CO(2) group is transferred by the carboxyltransferase to acetyl-CoA to form malonyl-CoA.</text>
</comment>
<comment type="catalytic activity">
    <reaction evidence="1">
        <text>N(6)-carboxybiotinyl-L-lysyl-[protein] + acetyl-CoA = N(6)-biotinyl-L-lysyl-[protein] + malonyl-CoA</text>
        <dbReference type="Rhea" id="RHEA:54728"/>
        <dbReference type="Rhea" id="RHEA-COMP:10505"/>
        <dbReference type="Rhea" id="RHEA-COMP:10506"/>
        <dbReference type="ChEBI" id="CHEBI:57288"/>
        <dbReference type="ChEBI" id="CHEBI:57384"/>
        <dbReference type="ChEBI" id="CHEBI:83144"/>
        <dbReference type="ChEBI" id="CHEBI:83145"/>
        <dbReference type="EC" id="2.1.3.15"/>
    </reaction>
</comment>
<comment type="pathway">
    <text evidence="1">Lipid metabolism; malonyl-CoA biosynthesis; malonyl-CoA from acetyl-CoA: step 1/1.</text>
</comment>
<comment type="subunit">
    <text evidence="1">Acetyl-CoA carboxylase is a heterohexamer composed of biotin carboxyl carrier protein (AccB), biotin carboxylase (AccC) and two subunits each of ACCase subunit alpha (AccA) and ACCase subunit beta (AccD).</text>
</comment>
<comment type="subcellular location">
    <subcellularLocation>
        <location evidence="1">Cytoplasm</location>
    </subcellularLocation>
</comment>
<comment type="similarity">
    <text evidence="1">Belongs to the AccA family.</text>
</comment>
<comment type="sequence caution" evidence="3">
    <conflict type="erroneous initiation">
        <sequence resource="EMBL-CDS" id="AAZ33423"/>
    </conflict>
</comment>
<name>ACCA_PSE14</name>
<organism>
    <name type="scientific">Pseudomonas savastanoi pv. phaseolicola (strain 1448A / Race 6)</name>
    <name type="common">Pseudomonas syringae pv. phaseolicola (strain 1448A / Race 6)</name>
    <dbReference type="NCBI Taxonomy" id="264730"/>
    <lineage>
        <taxon>Bacteria</taxon>
        <taxon>Pseudomonadati</taxon>
        <taxon>Pseudomonadota</taxon>
        <taxon>Gammaproteobacteria</taxon>
        <taxon>Pseudomonadales</taxon>
        <taxon>Pseudomonadaceae</taxon>
        <taxon>Pseudomonas</taxon>
    </lineage>
</organism>
<evidence type="ECO:0000255" key="1">
    <source>
        <dbReference type="HAMAP-Rule" id="MF_00823"/>
    </source>
</evidence>
<evidence type="ECO:0000255" key="2">
    <source>
        <dbReference type="PROSITE-ProRule" id="PRU01137"/>
    </source>
</evidence>
<evidence type="ECO:0000305" key="3"/>
<feature type="chain" id="PRO_0000223810" description="Acetyl-coenzyme A carboxylase carboxyl transferase subunit alpha">
    <location>
        <begin position="1"/>
        <end position="315"/>
    </location>
</feature>
<feature type="domain" description="CoA carboxyltransferase C-terminal" evidence="2">
    <location>
        <begin position="40"/>
        <end position="293"/>
    </location>
</feature>